<dbReference type="EC" id="7.1.1.-" evidence="1"/>
<dbReference type="EMBL" id="AM236080">
    <property type="protein sequence ID" value="CAK07198.1"/>
    <property type="molecule type" value="Genomic_DNA"/>
</dbReference>
<dbReference type="RefSeq" id="WP_011651369.1">
    <property type="nucleotide sequence ID" value="NC_008380.1"/>
</dbReference>
<dbReference type="SMR" id="Q1MIL2"/>
<dbReference type="EnsemblBacteria" id="CAK07198">
    <property type="protein sequence ID" value="CAK07198"/>
    <property type="gene ID" value="RL1703"/>
</dbReference>
<dbReference type="KEGG" id="rle:RL1703"/>
<dbReference type="eggNOG" id="COG0649">
    <property type="taxonomic scope" value="Bacteria"/>
</dbReference>
<dbReference type="HOGENOM" id="CLU_015134_1_1_5"/>
<dbReference type="Proteomes" id="UP000006575">
    <property type="component" value="Chromosome"/>
</dbReference>
<dbReference type="GO" id="GO:0005886">
    <property type="term" value="C:plasma membrane"/>
    <property type="evidence" value="ECO:0007669"/>
    <property type="project" value="UniProtKB-SubCell"/>
</dbReference>
<dbReference type="GO" id="GO:0051287">
    <property type="term" value="F:NAD binding"/>
    <property type="evidence" value="ECO:0007669"/>
    <property type="project" value="InterPro"/>
</dbReference>
<dbReference type="GO" id="GO:0050136">
    <property type="term" value="F:NADH:ubiquinone reductase (non-electrogenic) activity"/>
    <property type="evidence" value="ECO:0007669"/>
    <property type="project" value="UniProtKB-UniRule"/>
</dbReference>
<dbReference type="GO" id="GO:0048038">
    <property type="term" value="F:quinone binding"/>
    <property type="evidence" value="ECO:0007669"/>
    <property type="project" value="UniProtKB-KW"/>
</dbReference>
<dbReference type="FunFam" id="1.10.645.10:FF:000005">
    <property type="entry name" value="NADH-quinone oxidoreductase subunit D"/>
    <property type="match status" value="1"/>
</dbReference>
<dbReference type="Gene3D" id="1.10.645.10">
    <property type="entry name" value="Cytochrome-c3 Hydrogenase, chain B"/>
    <property type="match status" value="1"/>
</dbReference>
<dbReference type="HAMAP" id="MF_01358">
    <property type="entry name" value="NDH1_NuoD"/>
    <property type="match status" value="1"/>
</dbReference>
<dbReference type="InterPro" id="IPR001135">
    <property type="entry name" value="NADH_Q_OxRdtase_suD"/>
</dbReference>
<dbReference type="InterPro" id="IPR014029">
    <property type="entry name" value="NADH_UbQ_OxRdtase_49kDa_CS"/>
</dbReference>
<dbReference type="InterPro" id="IPR022885">
    <property type="entry name" value="NDH1_su_D/H"/>
</dbReference>
<dbReference type="InterPro" id="IPR029014">
    <property type="entry name" value="NiFe-Hase_large"/>
</dbReference>
<dbReference type="NCBIfam" id="TIGR01962">
    <property type="entry name" value="NuoD"/>
    <property type="match status" value="1"/>
</dbReference>
<dbReference type="NCBIfam" id="NF004739">
    <property type="entry name" value="PRK06075.1"/>
    <property type="match status" value="1"/>
</dbReference>
<dbReference type="PANTHER" id="PTHR11993:SF10">
    <property type="entry name" value="NADH DEHYDROGENASE [UBIQUINONE] IRON-SULFUR PROTEIN 2, MITOCHONDRIAL"/>
    <property type="match status" value="1"/>
</dbReference>
<dbReference type="PANTHER" id="PTHR11993">
    <property type="entry name" value="NADH-UBIQUINONE OXIDOREDUCTASE 49 KDA SUBUNIT"/>
    <property type="match status" value="1"/>
</dbReference>
<dbReference type="Pfam" id="PF00346">
    <property type="entry name" value="Complex1_49kDa"/>
    <property type="match status" value="1"/>
</dbReference>
<dbReference type="SUPFAM" id="SSF56762">
    <property type="entry name" value="HydB/Nqo4-like"/>
    <property type="match status" value="1"/>
</dbReference>
<dbReference type="PROSITE" id="PS00535">
    <property type="entry name" value="COMPLEX1_49K"/>
    <property type="match status" value="1"/>
</dbReference>
<sequence>MTEHNVRNFNINFGPQHPAAHGVLRLVLELDGEIVERVDPHIGLLHRGTEKLIETKTYLQAVPYFDRLDYVAPMNQEHAYAMAVEKLLGIEIPIRGQLIRVLYSEIGRILSHLLNVTTQAMDVGALTPPLWGFEEREKLMVFYERASGSRMHAAYFRPGGVHQDLPEQLVQDIGAWCDPFLKALDDIDNLLTGNRIFKQRNVDIGVVSLDECWAWGFSGVMVRGSGAAWDLRRAQPYECYSDLEFDIPIGKNGDNYDRYLIRMIEMRESVRIMKQCVNRLLSDAKTGPFSSIDGKVVPPKRGEMKRSMEALIHHFKLYTEGYHVPAGEVYAAVEAPKGEFGVYLVSDGTNKPYRCKIRAPGYAHLQAMDFMCRGHQLADVAAVLGSLDIVFGEVDR</sequence>
<reference key="1">
    <citation type="journal article" date="2006" name="Genome Biol.">
        <title>The genome of Rhizobium leguminosarum has recognizable core and accessory components.</title>
        <authorList>
            <person name="Young J.P.W."/>
            <person name="Crossman L.C."/>
            <person name="Johnston A.W.B."/>
            <person name="Thomson N.R."/>
            <person name="Ghazoui Z.F."/>
            <person name="Hull K.H."/>
            <person name="Wexler M."/>
            <person name="Curson A.R.J."/>
            <person name="Todd J.D."/>
            <person name="Poole P.S."/>
            <person name="Mauchline T.H."/>
            <person name="East A.K."/>
            <person name="Quail M.A."/>
            <person name="Churcher C."/>
            <person name="Arrowsmith C."/>
            <person name="Cherevach I."/>
            <person name="Chillingworth T."/>
            <person name="Clarke K."/>
            <person name="Cronin A."/>
            <person name="Davis P."/>
            <person name="Fraser A."/>
            <person name="Hance Z."/>
            <person name="Hauser H."/>
            <person name="Jagels K."/>
            <person name="Moule S."/>
            <person name="Mungall K."/>
            <person name="Norbertczak H."/>
            <person name="Rabbinowitsch E."/>
            <person name="Sanders M."/>
            <person name="Simmonds M."/>
            <person name="Whitehead S."/>
            <person name="Parkhill J."/>
        </authorList>
    </citation>
    <scope>NUCLEOTIDE SEQUENCE [LARGE SCALE GENOMIC DNA]</scope>
    <source>
        <strain>DSM 114642 / LMG 32736 / 3841</strain>
    </source>
</reference>
<accession>Q1MIL2</accession>
<keyword id="KW-0997">Cell inner membrane</keyword>
<keyword id="KW-1003">Cell membrane</keyword>
<keyword id="KW-0472">Membrane</keyword>
<keyword id="KW-0520">NAD</keyword>
<keyword id="KW-0874">Quinone</keyword>
<keyword id="KW-1278">Translocase</keyword>
<keyword id="KW-0813">Transport</keyword>
<keyword id="KW-0830">Ubiquinone</keyword>
<organism>
    <name type="scientific">Rhizobium johnstonii (strain DSM 114642 / LMG 32736 / 3841)</name>
    <name type="common">Rhizobium leguminosarum bv. viciae</name>
    <dbReference type="NCBI Taxonomy" id="216596"/>
    <lineage>
        <taxon>Bacteria</taxon>
        <taxon>Pseudomonadati</taxon>
        <taxon>Pseudomonadota</taxon>
        <taxon>Alphaproteobacteria</taxon>
        <taxon>Hyphomicrobiales</taxon>
        <taxon>Rhizobiaceae</taxon>
        <taxon>Rhizobium/Agrobacterium group</taxon>
        <taxon>Rhizobium</taxon>
        <taxon>Rhizobium johnstonii</taxon>
    </lineage>
</organism>
<name>NUOD_RHIJ3</name>
<proteinExistence type="inferred from homology"/>
<evidence type="ECO:0000255" key="1">
    <source>
        <dbReference type="HAMAP-Rule" id="MF_01358"/>
    </source>
</evidence>
<feature type="chain" id="PRO_0000357896" description="NADH-quinone oxidoreductase subunit D">
    <location>
        <begin position="1"/>
        <end position="396"/>
    </location>
</feature>
<comment type="function">
    <text evidence="1">NDH-1 shuttles electrons from NADH, via FMN and iron-sulfur (Fe-S) centers, to quinones in the respiratory chain. The immediate electron acceptor for the enzyme in this species is believed to be ubiquinone. Couples the redox reaction to proton translocation (for every two electrons transferred, four hydrogen ions are translocated across the cytoplasmic membrane), and thus conserves the redox energy in a proton gradient.</text>
</comment>
<comment type="catalytic activity">
    <reaction evidence="1">
        <text>a quinone + NADH + 5 H(+)(in) = a quinol + NAD(+) + 4 H(+)(out)</text>
        <dbReference type="Rhea" id="RHEA:57888"/>
        <dbReference type="ChEBI" id="CHEBI:15378"/>
        <dbReference type="ChEBI" id="CHEBI:24646"/>
        <dbReference type="ChEBI" id="CHEBI:57540"/>
        <dbReference type="ChEBI" id="CHEBI:57945"/>
        <dbReference type="ChEBI" id="CHEBI:132124"/>
    </reaction>
</comment>
<comment type="subunit">
    <text evidence="1">NDH-1 is composed of 14 different subunits. Subunits NuoB, C, D, E, F, and G constitute the peripheral sector of the complex.</text>
</comment>
<comment type="subcellular location">
    <subcellularLocation>
        <location evidence="1">Cell inner membrane</location>
        <topology evidence="1">Peripheral membrane protein</topology>
        <orientation evidence="1">Cytoplasmic side</orientation>
    </subcellularLocation>
</comment>
<comment type="similarity">
    <text evidence="1">Belongs to the complex I 49 kDa subunit family.</text>
</comment>
<protein>
    <recommendedName>
        <fullName evidence="1">NADH-quinone oxidoreductase subunit D</fullName>
        <ecNumber evidence="1">7.1.1.-</ecNumber>
    </recommendedName>
    <alternativeName>
        <fullName evidence="1">NADH dehydrogenase I subunit D</fullName>
    </alternativeName>
    <alternativeName>
        <fullName evidence="1">NDH-1 subunit D</fullName>
    </alternativeName>
</protein>
<gene>
    <name evidence="1" type="primary">nuoD</name>
    <name type="ordered locus">RL1703</name>
</gene>